<gene>
    <name type="primary">Hrb87F</name>
    <name type="synonym">hrp36</name>
    <name type="ORF">CG12749</name>
</gene>
<accession>P48810</accession>
<accession>Q24486</accession>
<accession>Q8INH0</accession>
<accession>Q9VFT2</accession>
<comment type="function">
    <text evidence="4">This protein is a component of ribonucleosomes. Could be needed to organize a concentration gradient of a dorsalizing morphogen (Dm) originating in the germinal vesicle.</text>
</comment>
<comment type="subcellular location">
    <subcellularLocation>
        <location evidence="3">Nucleus</location>
    </subcellularLocation>
    <subcellularLocation>
        <location evidence="3">Cytoplasm</location>
    </subcellularLocation>
    <text>Nuclear and/or cytoplasmic.</text>
</comment>
<comment type="alternative products">
    <event type="alternative splicing"/>
    <isoform>
        <id>P48810-1</id>
        <name>A</name>
        <sequence type="displayed"/>
    </isoform>
    <isoform>
        <id>P48810-2</id>
        <name>B</name>
        <sequence type="described" ref="VSP_005807"/>
    </isoform>
</comment>
<comment type="developmental stage">
    <text evidence="5">Expressed both maternally and zygotically.</text>
</comment>
<name>RB87F_DROME</name>
<dbReference type="EMBL" id="X54803">
    <property type="protein sequence ID" value="CAA38574.1"/>
    <property type="molecule type" value="mRNA"/>
</dbReference>
<dbReference type="EMBL" id="X58183">
    <property type="protein sequence ID" value="CAA41170.1"/>
    <property type="molecule type" value="Genomic_DNA"/>
</dbReference>
<dbReference type="EMBL" id="X58184">
    <property type="protein sequence ID" value="CAA41170.1"/>
    <property type="status" value="JOINED"/>
    <property type="molecule type" value="Genomic_DNA"/>
</dbReference>
<dbReference type="EMBL" id="X59691">
    <property type="protein sequence ID" value="CAA42212.1"/>
    <property type="molecule type" value="Genomic_DNA"/>
</dbReference>
<dbReference type="EMBL" id="X62636">
    <property type="protein sequence ID" value="CAA44502.1"/>
    <property type="molecule type" value="mRNA"/>
</dbReference>
<dbReference type="EMBL" id="AE014297">
    <property type="protein sequence ID" value="AAF54967.1"/>
    <property type="molecule type" value="Genomic_DNA"/>
</dbReference>
<dbReference type="EMBL" id="AE014297">
    <property type="protein sequence ID" value="AAN13574.1"/>
    <property type="molecule type" value="Genomic_DNA"/>
</dbReference>
<dbReference type="EMBL" id="BT012315">
    <property type="protein sequence ID" value="AAS77440.1"/>
    <property type="molecule type" value="mRNA"/>
</dbReference>
<dbReference type="PIR" id="A41732">
    <property type="entry name" value="A41732"/>
</dbReference>
<dbReference type="PIR" id="S22315">
    <property type="entry name" value="S22315"/>
</dbReference>
<dbReference type="RefSeq" id="NP_001163602.1">
    <molecule id="P48810-1"/>
    <property type="nucleotide sequence ID" value="NM_001170131.2"/>
</dbReference>
<dbReference type="RefSeq" id="NP_001262538.1">
    <molecule id="P48810-1"/>
    <property type="nucleotide sequence ID" value="NM_001275609.1"/>
</dbReference>
<dbReference type="RefSeq" id="NP_476806.2">
    <molecule id="P48810-1"/>
    <property type="nucleotide sequence ID" value="NM_057458.5"/>
</dbReference>
<dbReference type="RefSeq" id="NP_476807.1">
    <molecule id="P48810-1"/>
    <property type="nucleotide sequence ID" value="NM_057459.5"/>
</dbReference>
<dbReference type="SMR" id="P48810"/>
<dbReference type="BioGRID" id="71477">
    <property type="interactions" value="25"/>
</dbReference>
<dbReference type="FunCoup" id="P48810">
    <property type="interactions" value="2178"/>
</dbReference>
<dbReference type="IntAct" id="P48810">
    <property type="interactions" value="14"/>
</dbReference>
<dbReference type="STRING" id="7227.FBpp0306562"/>
<dbReference type="PaxDb" id="7227-FBpp0302741"/>
<dbReference type="DNASU" id="48535"/>
<dbReference type="EnsemblMetazoa" id="FBtr0082851">
    <molecule id="P48810-1"/>
    <property type="protein sequence ID" value="FBpp0082316"/>
    <property type="gene ID" value="FBgn0004237"/>
</dbReference>
<dbReference type="EnsemblMetazoa" id="FBtr0300590">
    <molecule id="P48810-1"/>
    <property type="protein sequence ID" value="FBpp0289817"/>
    <property type="gene ID" value="FBgn0004237"/>
</dbReference>
<dbReference type="EnsemblMetazoa" id="FBtr0310621">
    <molecule id="P48810-1"/>
    <property type="protein sequence ID" value="FBpp0302741"/>
    <property type="gene ID" value="FBgn0004237"/>
</dbReference>
<dbReference type="EnsemblMetazoa" id="FBtr0334495">
    <molecule id="P48810-1"/>
    <property type="protein sequence ID" value="FBpp0306562"/>
    <property type="gene ID" value="FBgn0004237"/>
</dbReference>
<dbReference type="GeneID" id="48535"/>
<dbReference type="KEGG" id="dme:Dmel_CG12749"/>
<dbReference type="AGR" id="FB:FBgn0004237"/>
<dbReference type="CTD" id="48535"/>
<dbReference type="FlyBase" id="FBgn0004237">
    <property type="gene designation" value="Hrb87F"/>
</dbReference>
<dbReference type="VEuPathDB" id="VectorBase:FBgn0004237"/>
<dbReference type="eggNOG" id="KOG0118">
    <property type="taxonomic scope" value="Eukaryota"/>
</dbReference>
<dbReference type="GeneTree" id="ENSGT00940000167175"/>
<dbReference type="HOGENOM" id="CLU_012062_1_3_1"/>
<dbReference type="InParanoid" id="P48810"/>
<dbReference type="OMA" id="NTAPWGV"/>
<dbReference type="OrthoDB" id="1875751at2759"/>
<dbReference type="PhylomeDB" id="P48810"/>
<dbReference type="SignaLink" id="P48810"/>
<dbReference type="BioGRID-ORCS" id="48535">
    <property type="hits" value="0 hits in 3 CRISPR screens"/>
</dbReference>
<dbReference type="ChiTaRS" id="Hrb87F">
    <property type="organism name" value="fly"/>
</dbReference>
<dbReference type="GenomeRNAi" id="48535"/>
<dbReference type="PRO" id="PR:P48810"/>
<dbReference type="Proteomes" id="UP000000803">
    <property type="component" value="Chromosome 3R"/>
</dbReference>
<dbReference type="Bgee" id="FBgn0004237">
    <property type="expression patterns" value="Expressed in wing disc and 270 other cell types or tissues"/>
</dbReference>
<dbReference type="ExpressionAtlas" id="P48810">
    <property type="expression patterns" value="baseline and differential"/>
</dbReference>
<dbReference type="GO" id="GO:0000785">
    <property type="term" value="C:chromatin"/>
    <property type="evidence" value="ECO:0000314"/>
    <property type="project" value="FlyBase"/>
</dbReference>
<dbReference type="GO" id="GO:0005737">
    <property type="term" value="C:cytoplasm"/>
    <property type="evidence" value="ECO:0007669"/>
    <property type="project" value="UniProtKB-SubCell"/>
</dbReference>
<dbReference type="GO" id="GO:0000792">
    <property type="term" value="C:heterochromatin"/>
    <property type="evidence" value="ECO:0000314"/>
    <property type="project" value="FlyBase"/>
</dbReference>
<dbReference type="GO" id="GO:0005654">
    <property type="term" value="C:nucleoplasm"/>
    <property type="evidence" value="ECO:0000314"/>
    <property type="project" value="FlyBase"/>
</dbReference>
<dbReference type="GO" id="GO:0005634">
    <property type="term" value="C:nucleus"/>
    <property type="evidence" value="ECO:0000314"/>
    <property type="project" value="FlyBase"/>
</dbReference>
<dbReference type="GO" id="GO:0035062">
    <property type="term" value="C:omega speckle"/>
    <property type="evidence" value="ECO:0000314"/>
    <property type="project" value="FlyBase"/>
</dbReference>
<dbReference type="GO" id="GO:0005703">
    <property type="term" value="C:polytene chromosome puff"/>
    <property type="evidence" value="ECO:0000314"/>
    <property type="project" value="FlyBase"/>
</dbReference>
<dbReference type="GO" id="GO:1990904">
    <property type="term" value="C:ribonucleoprotein complex"/>
    <property type="evidence" value="ECO:0000314"/>
    <property type="project" value="FlyBase"/>
</dbReference>
<dbReference type="GO" id="GO:0003730">
    <property type="term" value="F:mRNA 3'-UTR binding"/>
    <property type="evidence" value="ECO:0000318"/>
    <property type="project" value="GO_Central"/>
</dbReference>
<dbReference type="GO" id="GO:0003729">
    <property type="term" value="F:mRNA binding"/>
    <property type="evidence" value="ECO:0000250"/>
    <property type="project" value="FlyBase"/>
</dbReference>
<dbReference type="GO" id="GO:0034046">
    <property type="term" value="F:poly(G) binding"/>
    <property type="evidence" value="ECO:0000318"/>
    <property type="project" value="GO_Central"/>
</dbReference>
<dbReference type="GO" id="GO:0043565">
    <property type="term" value="F:sequence-specific DNA binding"/>
    <property type="evidence" value="ECO:0000314"/>
    <property type="project" value="FlyBase"/>
</dbReference>
<dbReference type="GO" id="GO:0001745">
    <property type="term" value="P:compound eye morphogenesis"/>
    <property type="evidence" value="ECO:0000316"/>
    <property type="project" value="FlyBase"/>
</dbReference>
<dbReference type="GO" id="GO:0008585">
    <property type="term" value="P:female gonad development"/>
    <property type="evidence" value="ECO:0000315"/>
    <property type="project" value="FlyBase"/>
</dbReference>
<dbReference type="GO" id="GO:0000278">
    <property type="term" value="P:mitotic cell cycle"/>
    <property type="evidence" value="ECO:0007001"/>
    <property type="project" value="FlyBase"/>
</dbReference>
<dbReference type="GO" id="GO:0048026">
    <property type="term" value="P:positive regulation of mRNA splicing, via spliceosome"/>
    <property type="evidence" value="ECO:0000318"/>
    <property type="project" value="GO_Central"/>
</dbReference>
<dbReference type="GO" id="GO:0000381">
    <property type="term" value="P:regulation of alternative mRNA splicing, via spliceosome"/>
    <property type="evidence" value="ECO:0000315"/>
    <property type="project" value="FlyBase"/>
</dbReference>
<dbReference type="GO" id="GO:0009408">
    <property type="term" value="P:response to heat"/>
    <property type="evidence" value="ECO:0000315"/>
    <property type="project" value="FlyBase"/>
</dbReference>
<dbReference type="GO" id="GO:0042594">
    <property type="term" value="P:response to starvation"/>
    <property type="evidence" value="ECO:0000315"/>
    <property type="project" value="FlyBase"/>
</dbReference>
<dbReference type="CDD" id="cd12578">
    <property type="entry name" value="RRM1_hnRNPA_like"/>
    <property type="match status" value="1"/>
</dbReference>
<dbReference type="FunFam" id="3.30.70.330:FF:000456">
    <property type="entry name" value="Heterogeneous nuclear ribonucleoprotein A1"/>
    <property type="match status" value="1"/>
</dbReference>
<dbReference type="FunFam" id="3.30.70.330:FF:000040">
    <property type="entry name" value="Heterogeneous nuclear ribonucleoprotein A2/B1"/>
    <property type="match status" value="1"/>
</dbReference>
<dbReference type="Gene3D" id="3.30.70.330">
    <property type="match status" value="2"/>
</dbReference>
<dbReference type="InterPro" id="IPR012677">
    <property type="entry name" value="Nucleotide-bd_a/b_plait_sf"/>
</dbReference>
<dbReference type="InterPro" id="IPR035979">
    <property type="entry name" value="RBD_domain_sf"/>
</dbReference>
<dbReference type="InterPro" id="IPR000504">
    <property type="entry name" value="RRM_dom"/>
</dbReference>
<dbReference type="PANTHER" id="PTHR48026:SF14">
    <property type="entry name" value="HETEROGENEOUS NUCLEAR RIBONUCLEOPROTEIN A1"/>
    <property type="match status" value="1"/>
</dbReference>
<dbReference type="PANTHER" id="PTHR48026">
    <property type="entry name" value="HOMOLOGOUS TO DROSOPHILA SQD (SQUID) PROTEIN"/>
    <property type="match status" value="1"/>
</dbReference>
<dbReference type="Pfam" id="PF00076">
    <property type="entry name" value="RRM_1"/>
    <property type="match status" value="2"/>
</dbReference>
<dbReference type="SMART" id="SM00360">
    <property type="entry name" value="RRM"/>
    <property type="match status" value="2"/>
</dbReference>
<dbReference type="SUPFAM" id="SSF54928">
    <property type="entry name" value="RNA-binding domain, RBD"/>
    <property type="match status" value="2"/>
</dbReference>
<dbReference type="PROSITE" id="PS50102">
    <property type="entry name" value="RRM"/>
    <property type="match status" value="2"/>
</dbReference>
<sequence>MAEQNDSNGNYDDGEEITEPEQLRKLFIGGLDYRTTDDGLKAHFEKWGNIVDVVVMKDPKTKRSRGFGFITYSQSYMIDNAQNARPHKIDGRTVEPKRAVPRQEIDSPNAGATVKKLFVGGLRDDHDEECLREYFKDFGQIVSVNIVSDKDTGKKRGFAFIEFDDYDPVDKIILQKTHSIKNKTLDVKKAIAKQDMDRQGGGGGRGGPRAGGRGGQGDRGQGGGGWGGQNRQNGGGNWGGAGGGGGFGNSGGNFGGGQGGGSGGWNQQGGSGGGPWNNQGGGNGGWNGGGGGGYGGGNSNGSWGGNGGGGGGGGGFGNEYQQSYGGGPQRNSNFGNNRPAPYSQGGGGGGFNKGNQGGGQGFAGNNYNTGGGGQGGNMGGGNRRY</sequence>
<evidence type="ECO:0000255" key="1">
    <source>
        <dbReference type="PROSITE-ProRule" id="PRU00176"/>
    </source>
</evidence>
<evidence type="ECO:0000256" key="2">
    <source>
        <dbReference type="SAM" id="MobiDB-lite"/>
    </source>
</evidence>
<evidence type="ECO:0000269" key="3">
    <source>
    </source>
</evidence>
<evidence type="ECO:0000269" key="4">
    <source>
    </source>
</evidence>
<evidence type="ECO:0000269" key="5">
    <source>
    </source>
</evidence>
<evidence type="ECO:0000303" key="6">
    <source>
    </source>
</evidence>
<evidence type="ECO:0000305" key="7"/>
<protein>
    <recommendedName>
        <fullName>Heterogeneous nuclear ribonucleoprotein 87F</fullName>
    </recommendedName>
    <alternativeName>
        <fullName>HRP36.1 protein</fullName>
    </alternativeName>
    <alternativeName>
        <fullName>Protein P11</fullName>
    </alternativeName>
</protein>
<keyword id="KW-0025">Alternative splicing</keyword>
<keyword id="KW-0963">Cytoplasm</keyword>
<keyword id="KW-0539">Nucleus</keyword>
<keyword id="KW-1185">Reference proteome</keyword>
<keyword id="KW-0677">Repeat</keyword>
<keyword id="KW-0687">Ribonucleoprotein</keyword>
<keyword id="KW-0694">RNA-binding</keyword>
<organism>
    <name type="scientific">Drosophila melanogaster</name>
    <name type="common">Fruit fly</name>
    <dbReference type="NCBI Taxonomy" id="7227"/>
    <lineage>
        <taxon>Eukaryota</taxon>
        <taxon>Metazoa</taxon>
        <taxon>Ecdysozoa</taxon>
        <taxon>Arthropoda</taxon>
        <taxon>Hexapoda</taxon>
        <taxon>Insecta</taxon>
        <taxon>Pterygota</taxon>
        <taxon>Neoptera</taxon>
        <taxon>Endopterygota</taxon>
        <taxon>Diptera</taxon>
        <taxon>Brachycera</taxon>
        <taxon>Muscomorpha</taxon>
        <taxon>Ephydroidea</taxon>
        <taxon>Drosophilidae</taxon>
        <taxon>Drosophila</taxon>
        <taxon>Sophophora</taxon>
    </lineage>
</organism>
<feature type="chain" id="PRO_0000081750" description="Heterogeneous nuclear ribonucleoprotein 87F">
    <location>
        <begin position="1"/>
        <end position="385"/>
    </location>
</feature>
<feature type="domain" description="RRM 1" evidence="1">
    <location>
        <begin position="24"/>
        <end position="101"/>
    </location>
</feature>
<feature type="domain" description="RRM 2" evidence="1">
    <location>
        <begin position="115"/>
        <end position="192"/>
    </location>
</feature>
<feature type="region of interest" description="Disordered" evidence="2">
    <location>
        <begin position="192"/>
        <end position="289"/>
    </location>
</feature>
<feature type="region of interest" description="Disordered" evidence="2">
    <location>
        <begin position="305"/>
        <end position="385"/>
    </location>
</feature>
<feature type="compositionally biased region" description="Gly residues" evidence="2">
    <location>
        <begin position="199"/>
        <end position="289"/>
    </location>
</feature>
<feature type="compositionally biased region" description="Gly residues" evidence="2">
    <location>
        <begin position="305"/>
        <end position="317"/>
    </location>
</feature>
<feature type="compositionally biased region" description="Polar residues" evidence="2">
    <location>
        <begin position="319"/>
        <end position="336"/>
    </location>
</feature>
<feature type="compositionally biased region" description="Gly residues" evidence="2">
    <location>
        <begin position="344"/>
        <end position="362"/>
    </location>
</feature>
<feature type="compositionally biased region" description="Gly residues" evidence="2">
    <location>
        <begin position="369"/>
        <end position="385"/>
    </location>
</feature>
<feature type="splice variant" id="VSP_005807" description="In isoform B." evidence="6">
    <location>
        <begin position="310"/>
        <end position="369"/>
    </location>
</feature>
<feature type="sequence conflict" description="In Ref. 2; CAA41170." evidence="7" ref="2">
    <original>A</original>
    <variation>R</variation>
    <location>
        <position position="241"/>
    </location>
</feature>
<feature type="sequence conflict" description="In Ref. 2; CAA41170/CAA42212." evidence="7" ref="2">
    <original>S</original>
    <variation>T</variation>
    <location>
        <position position="271"/>
    </location>
</feature>
<feature type="sequence conflict" description="In Ref. 1, 2 and 3." evidence="7" ref="1 2 3">
    <original>G</original>
    <variation>GG</variation>
    <location>
        <position position="293"/>
    </location>
</feature>
<proteinExistence type="evidence at transcript level"/>
<reference key="1">
    <citation type="journal article" date="1991" name="Nucleic Acids Res.">
        <title>The Drosophila Hrb87F gene encodes a new member of the A and B hnRNP protein group.</title>
        <authorList>
            <person name="Haynes S.R."/>
            <person name="Johnson D."/>
            <person name="Raychaudhuri G."/>
            <person name="Beyer A.L."/>
        </authorList>
    </citation>
    <scope>NUCLEOTIDE SEQUENCE [MRNA] (ISOFORM A)</scope>
    <scope>DEVELOPMENTAL STAGE</scope>
    <source>
        <strain>Canton-S</strain>
        <strain>Oregon-R</strain>
        <tissue>Embryo</tissue>
        <tissue>Ovary</tissue>
    </source>
</reference>
<reference key="2">
    <citation type="journal article" date="1991" name="Nucleic Acids Res.">
        <title>Drosophila snRNP associated protein P11 which specifically binds to heat shock puff 93D reveals strong homology with hnRNP core protein A1.</title>
        <authorList>
            <person name="Hovemann B.T."/>
            <person name="Dessen E."/>
            <person name="Mechler H."/>
            <person name="Mack E."/>
        </authorList>
    </citation>
    <scope>NUCLEOTIDE SEQUENCE [GENOMIC DNA]</scope>
    <scope>ALTERNATIVE SPLICING</scope>
    <scope>SUBCELLULAR LOCATION</scope>
    <source>
        <strain>Canton-S</strain>
        <tissue>Embryo</tissue>
    </source>
</reference>
<reference key="3">
    <citation type="journal article" date="1992" name="J. Cell Biol.">
        <title>Characterization of the major hnRNP proteins from Drosophila melanogaster.</title>
        <authorList>
            <person name="Matunis E.L."/>
            <person name="Matunis M.J."/>
            <person name="Dreyfuss G."/>
        </authorList>
    </citation>
    <scope>NUCLEOTIDE SEQUENCE [MRNA] (ISOFORM B)</scope>
    <scope>FUNCTION</scope>
    <source>
        <strain>Canton-S</strain>
        <tissue>Embryo</tissue>
    </source>
</reference>
<reference key="4">
    <citation type="journal article" date="2000" name="Science">
        <title>The genome sequence of Drosophila melanogaster.</title>
        <authorList>
            <person name="Adams M.D."/>
            <person name="Celniker S.E."/>
            <person name="Holt R.A."/>
            <person name="Evans C.A."/>
            <person name="Gocayne J.D."/>
            <person name="Amanatides P.G."/>
            <person name="Scherer S.E."/>
            <person name="Li P.W."/>
            <person name="Hoskins R.A."/>
            <person name="Galle R.F."/>
            <person name="George R.A."/>
            <person name="Lewis S.E."/>
            <person name="Richards S."/>
            <person name="Ashburner M."/>
            <person name="Henderson S.N."/>
            <person name="Sutton G.G."/>
            <person name="Wortman J.R."/>
            <person name="Yandell M.D."/>
            <person name="Zhang Q."/>
            <person name="Chen L.X."/>
            <person name="Brandon R.C."/>
            <person name="Rogers Y.-H.C."/>
            <person name="Blazej R.G."/>
            <person name="Champe M."/>
            <person name="Pfeiffer B.D."/>
            <person name="Wan K.H."/>
            <person name="Doyle C."/>
            <person name="Baxter E.G."/>
            <person name="Helt G."/>
            <person name="Nelson C.R."/>
            <person name="Miklos G.L.G."/>
            <person name="Abril J.F."/>
            <person name="Agbayani A."/>
            <person name="An H.-J."/>
            <person name="Andrews-Pfannkoch C."/>
            <person name="Baldwin D."/>
            <person name="Ballew R.M."/>
            <person name="Basu A."/>
            <person name="Baxendale J."/>
            <person name="Bayraktaroglu L."/>
            <person name="Beasley E.M."/>
            <person name="Beeson K.Y."/>
            <person name="Benos P.V."/>
            <person name="Berman B.P."/>
            <person name="Bhandari D."/>
            <person name="Bolshakov S."/>
            <person name="Borkova D."/>
            <person name="Botchan M.R."/>
            <person name="Bouck J."/>
            <person name="Brokstein P."/>
            <person name="Brottier P."/>
            <person name="Burtis K.C."/>
            <person name="Busam D.A."/>
            <person name="Butler H."/>
            <person name="Cadieu E."/>
            <person name="Center A."/>
            <person name="Chandra I."/>
            <person name="Cherry J.M."/>
            <person name="Cawley S."/>
            <person name="Dahlke C."/>
            <person name="Davenport L.B."/>
            <person name="Davies P."/>
            <person name="de Pablos B."/>
            <person name="Delcher A."/>
            <person name="Deng Z."/>
            <person name="Mays A.D."/>
            <person name="Dew I."/>
            <person name="Dietz S.M."/>
            <person name="Dodson K."/>
            <person name="Doup L.E."/>
            <person name="Downes M."/>
            <person name="Dugan-Rocha S."/>
            <person name="Dunkov B.C."/>
            <person name="Dunn P."/>
            <person name="Durbin K.J."/>
            <person name="Evangelista C.C."/>
            <person name="Ferraz C."/>
            <person name="Ferriera S."/>
            <person name="Fleischmann W."/>
            <person name="Fosler C."/>
            <person name="Gabrielian A.E."/>
            <person name="Garg N.S."/>
            <person name="Gelbart W.M."/>
            <person name="Glasser K."/>
            <person name="Glodek A."/>
            <person name="Gong F."/>
            <person name="Gorrell J.H."/>
            <person name="Gu Z."/>
            <person name="Guan P."/>
            <person name="Harris M."/>
            <person name="Harris N.L."/>
            <person name="Harvey D.A."/>
            <person name="Heiman T.J."/>
            <person name="Hernandez J.R."/>
            <person name="Houck J."/>
            <person name="Hostin D."/>
            <person name="Houston K.A."/>
            <person name="Howland T.J."/>
            <person name="Wei M.-H."/>
            <person name="Ibegwam C."/>
            <person name="Jalali M."/>
            <person name="Kalush F."/>
            <person name="Karpen G.H."/>
            <person name="Ke Z."/>
            <person name="Kennison J.A."/>
            <person name="Ketchum K.A."/>
            <person name="Kimmel B.E."/>
            <person name="Kodira C.D."/>
            <person name="Kraft C.L."/>
            <person name="Kravitz S."/>
            <person name="Kulp D."/>
            <person name="Lai Z."/>
            <person name="Lasko P."/>
            <person name="Lei Y."/>
            <person name="Levitsky A.A."/>
            <person name="Li J.H."/>
            <person name="Li Z."/>
            <person name="Liang Y."/>
            <person name="Lin X."/>
            <person name="Liu X."/>
            <person name="Mattei B."/>
            <person name="McIntosh T.C."/>
            <person name="McLeod M.P."/>
            <person name="McPherson D."/>
            <person name="Merkulov G."/>
            <person name="Milshina N.V."/>
            <person name="Mobarry C."/>
            <person name="Morris J."/>
            <person name="Moshrefi A."/>
            <person name="Mount S.M."/>
            <person name="Moy M."/>
            <person name="Murphy B."/>
            <person name="Murphy L."/>
            <person name="Muzny D.M."/>
            <person name="Nelson D.L."/>
            <person name="Nelson D.R."/>
            <person name="Nelson K.A."/>
            <person name="Nixon K."/>
            <person name="Nusskern D.R."/>
            <person name="Pacleb J.M."/>
            <person name="Palazzolo M."/>
            <person name="Pittman G.S."/>
            <person name="Pan S."/>
            <person name="Pollard J."/>
            <person name="Puri V."/>
            <person name="Reese M.G."/>
            <person name="Reinert K."/>
            <person name="Remington K."/>
            <person name="Saunders R.D.C."/>
            <person name="Scheeler F."/>
            <person name="Shen H."/>
            <person name="Shue B.C."/>
            <person name="Siden-Kiamos I."/>
            <person name="Simpson M."/>
            <person name="Skupski M.P."/>
            <person name="Smith T.J."/>
            <person name="Spier E."/>
            <person name="Spradling A.C."/>
            <person name="Stapleton M."/>
            <person name="Strong R."/>
            <person name="Sun E."/>
            <person name="Svirskas R."/>
            <person name="Tector C."/>
            <person name="Turner R."/>
            <person name="Venter E."/>
            <person name="Wang A.H."/>
            <person name="Wang X."/>
            <person name="Wang Z.-Y."/>
            <person name="Wassarman D.A."/>
            <person name="Weinstock G.M."/>
            <person name="Weissenbach J."/>
            <person name="Williams S.M."/>
            <person name="Woodage T."/>
            <person name="Worley K.C."/>
            <person name="Wu D."/>
            <person name="Yang S."/>
            <person name="Yao Q.A."/>
            <person name="Ye J."/>
            <person name="Yeh R.-F."/>
            <person name="Zaveri J.S."/>
            <person name="Zhan M."/>
            <person name="Zhang G."/>
            <person name="Zhao Q."/>
            <person name="Zheng L."/>
            <person name="Zheng X.H."/>
            <person name="Zhong F.N."/>
            <person name="Zhong W."/>
            <person name="Zhou X."/>
            <person name="Zhu S.C."/>
            <person name="Zhu X."/>
            <person name="Smith H.O."/>
            <person name="Gibbs R.A."/>
            <person name="Myers E.W."/>
            <person name="Rubin G.M."/>
            <person name="Venter J.C."/>
        </authorList>
    </citation>
    <scope>NUCLEOTIDE SEQUENCE [LARGE SCALE GENOMIC DNA]</scope>
    <source>
        <strain>Berkeley</strain>
    </source>
</reference>
<reference key="5">
    <citation type="journal article" date="2002" name="Genome Biol.">
        <title>Annotation of the Drosophila melanogaster euchromatic genome: a systematic review.</title>
        <authorList>
            <person name="Misra S."/>
            <person name="Crosby M.A."/>
            <person name="Mungall C.J."/>
            <person name="Matthews B.B."/>
            <person name="Campbell K.S."/>
            <person name="Hradecky P."/>
            <person name="Huang Y."/>
            <person name="Kaminker J.S."/>
            <person name="Millburn G.H."/>
            <person name="Prochnik S.E."/>
            <person name="Smith C.D."/>
            <person name="Tupy J.L."/>
            <person name="Whitfield E.J."/>
            <person name="Bayraktaroglu L."/>
            <person name="Berman B.P."/>
            <person name="Bettencourt B.R."/>
            <person name="Celniker S.E."/>
            <person name="de Grey A.D.N.J."/>
            <person name="Drysdale R.A."/>
            <person name="Harris N.L."/>
            <person name="Richter J."/>
            <person name="Russo S."/>
            <person name="Schroeder A.J."/>
            <person name="Shu S.Q."/>
            <person name="Stapleton M."/>
            <person name="Yamada C."/>
            <person name="Ashburner M."/>
            <person name="Gelbart W.M."/>
            <person name="Rubin G.M."/>
            <person name="Lewis S.E."/>
        </authorList>
    </citation>
    <scope>GENOME REANNOTATION</scope>
    <scope>ALTERNATIVE SPLICING</scope>
    <source>
        <strain>Berkeley</strain>
    </source>
</reference>
<reference key="6">
    <citation type="submission" date="2004-03" db="EMBL/GenBank/DDBJ databases">
        <authorList>
            <person name="Stapleton M."/>
            <person name="Carlson J.W."/>
            <person name="Chavez C."/>
            <person name="Frise E."/>
            <person name="George R.A."/>
            <person name="Pacleb J.M."/>
            <person name="Park S."/>
            <person name="Wan K.H."/>
            <person name="Yu C."/>
            <person name="Rubin G.M."/>
            <person name="Celniker S.E."/>
        </authorList>
    </citation>
    <scope>NUCLEOTIDE SEQUENCE [LARGE SCALE MRNA] (ISOFORM A)</scope>
    <source>
        <strain>Berkeley</strain>
        <tissue>Embryo</tissue>
    </source>
</reference>